<reference key="1">
    <citation type="submission" date="2007-04" db="EMBL/GenBank/DDBJ databases">
        <title>Complete sequence of chromosome of Mycobacterium gilvum PYR-GCK.</title>
        <authorList>
            <consortium name="US DOE Joint Genome Institute"/>
            <person name="Copeland A."/>
            <person name="Lucas S."/>
            <person name="Lapidus A."/>
            <person name="Barry K."/>
            <person name="Detter J.C."/>
            <person name="Glavina del Rio T."/>
            <person name="Hammon N."/>
            <person name="Israni S."/>
            <person name="Dalin E."/>
            <person name="Tice H."/>
            <person name="Pitluck S."/>
            <person name="Chain P."/>
            <person name="Malfatti S."/>
            <person name="Shin M."/>
            <person name="Vergez L."/>
            <person name="Schmutz J."/>
            <person name="Larimer F."/>
            <person name="Land M."/>
            <person name="Hauser L."/>
            <person name="Kyrpides N."/>
            <person name="Mikhailova N."/>
            <person name="Miller C."/>
            <person name="Richardson P."/>
        </authorList>
    </citation>
    <scope>NUCLEOTIDE SEQUENCE [LARGE SCALE GENOMIC DNA]</scope>
    <source>
        <strain>PYR-GCK</strain>
    </source>
</reference>
<comment type="function">
    <text evidence="1">Endonuclease that specifically degrades the RNA of RNA-DNA hybrids.</text>
</comment>
<comment type="catalytic activity">
    <reaction evidence="1">
        <text>Endonucleolytic cleavage to 5'-phosphomonoester.</text>
        <dbReference type="EC" id="3.1.26.4"/>
    </reaction>
</comment>
<comment type="cofactor">
    <cofactor evidence="1">
        <name>Mn(2+)</name>
        <dbReference type="ChEBI" id="CHEBI:29035"/>
    </cofactor>
    <cofactor evidence="1">
        <name>Mg(2+)</name>
        <dbReference type="ChEBI" id="CHEBI:18420"/>
    </cofactor>
    <text evidence="1">Manganese or magnesium. Binds 1 divalent metal ion per monomer in the absence of substrate. May bind a second metal ion after substrate binding.</text>
</comment>
<comment type="subcellular location">
    <subcellularLocation>
        <location evidence="1">Cytoplasm</location>
    </subcellularLocation>
</comment>
<comment type="similarity">
    <text evidence="1">Belongs to the RNase HII family.</text>
</comment>
<accession>A4TE84</accession>
<dbReference type="EC" id="3.1.26.4" evidence="1"/>
<dbReference type="EMBL" id="CP000656">
    <property type="protein sequence ID" value="ABP46637.1"/>
    <property type="molecule type" value="Genomic_DNA"/>
</dbReference>
<dbReference type="SMR" id="A4TE84"/>
<dbReference type="STRING" id="350054.Mflv_4168"/>
<dbReference type="KEGG" id="mgi:Mflv_4168"/>
<dbReference type="eggNOG" id="COG0164">
    <property type="taxonomic scope" value="Bacteria"/>
</dbReference>
<dbReference type="HOGENOM" id="CLU_036532_1_0_11"/>
<dbReference type="OrthoDB" id="9803420at2"/>
<dbReference type="GO" id="GO:0005737">
    <property type="term" value="C:cytoplasm"/>
    <property type="evidence" value="ECO:0007669"/>
    <property type="project" value="UniProtKB-SubCell"/>
</dbReference>
<dbReference type="GO" id="GO:0032299">
    <property type="term" value="C:ribonuclease H2 complex"/>
    <property type="evidence" value="ECO:0007669"/>
    <property type="project" value="TreeGrafter"/>
</dbReference>
<dbReference type="GO" id="GO:0030145">
    <property type="term" value="F:manganese ion binding"/>
    <property type="evidence" value="ECO:0007669"/>
    <property type="project" value="UniProtKB-UniRule"/>
</dbReference>
<dbReference type="GO" id="GO:0003723">
    <property type="term" value="F:RNA binding"/>
    <property type="evidence" value="ECO:0007669"/>
    <property type="project" value="InterPro"/>
</dbReference>
<dbReference type="GO" id="GO:0004523">
    <property type="term" value="F:RNA-DNA hybrid ribonuclease activity"/>
    <property type="evidence" value="ECO:0007669"/>
    <property type="project" value="UniProtKB-UniRule"/>
</dbReference>
<dbReference type="GO" id="GO:0043137">
    <property type="term" value="P:DNA replication, removal of RNA primer"/>
    <property type="evidence" value="ECO:0007669"/>
    <property type="project" value="TreeGrafter"/>
</dbReference>
<dbReference type="GO" id="GO:0006298">
    <property type="term" value="P:mismatch repair"/>
    <property type="evidence" value="ECO:0007669"/>
    <property type="project" value="TreeGrafter"/>
</dbReference>
<dbReference type="CDD" id="cd07182">
    <property type="entry name" value="RNase_HII_bacteria_HII_like"/>
    <property type="match status" value="1"/>
</dbReference>
<dbReference type="FunFam" id="3.30.420.10:FF:000113">
    <property type="entry name" value="Ribonuclease HII"/>
    <property type="match status" value="1"/>
</dbReference>
<dbReference type="Gene3D" id="3.30.420.10">
    <property type="entry name" value="Ribonuclease H-like superfamily/Ribonuclease H"/>
    <property type="match status" value="1"/>
</dbReference>
<dbReference type="HAMAP" id="MF_00052_B">
    <property type="entry name" value="RNase_HII_B"/>
    <property type="match status" value="1"/>
</dbReference>
<dbReference type="InterPro" id="IPR022898">
    <property type="entry name" value="RNase_HII"/>
</dbReference>
<dbReference type="InterPro" id="IPR001352">
    <property type="entry name" value="RNase_HII/HIII"/>
</dbReference>
<dbReference type="InterPro" id="IPR024567">
    <property type="entry name" value="RNase_HII/HIII_dom"/>
</dbReference>
<dbReference type="InterPro" id="IPR012337">
    <property type="entry name" value="RNaseH-like_sf"/>
</dbReference>
<dbReference type="InterPro" id="IPR036397">
    <property type="entry name" value="RNaseH_sf"/>
</dbReference>
<dbReference type="NCBIfam" id="NF000595">
    <property type="entry name" value="PRK00015.1-3"/>
    <property type="match status" value="1"/>
</dbReference>
<dbReference type="NCBIfam" id="NF000598">
    <property type="entry name" value="PRK00015.2-2"/>
    <property type="match status" value="1"/>
</dbReference>
<dbReference type="NCBIfam" id="NF000600">
    <property type="entry name" value="PRK00015.2-4"/>
    <property type="match status" value="1"/>
</dbReference>
<dbReference type="PANTHER" id="PTHR10954">
    <property type="entry name" value="RIBONUCLEASE H2 SUBUNIT A"/>
    <property type="match status" value="1"/>
</dbReference>
<dbReference type="PANTHER" id="PTHR10954:SF18">
    <property type="entry name" value="RIBONUCLEASE HII"/>
    <property type="match status" value="1"/>
</dbReference>
<dbReference type="Pfam" id="PF01351">
    <property type="entry name" value="RNase_HII"/>
    <property type="match status" value="1"/>
</dbReference>
<dbReference type="SUPFAM" id="SSF53098">
    <property type="entry name" value="Ribonuclease H-like"/>
    <property type="match status" value="1"/>
</dbReference>
<dbReference type="PROSITE" id="PS51975">
    <property type="entry name" value="RNASE_H_2"/>
    <property type="match status" value="1"/>
</dbReference>
<sequence length="253" mass="26991">MPAVWPPRTVIRKSSGLRTLESALYRAGLGPVAGVDEVGRGACAGPLVVAACILGPNRLESLSALDDSKKLNESERERLFPLIRRYAVAFHVVFIPSVEVDRRGVHVANIEGMRRAVAGLAVRPGYVLSDGFRVPGLPMPSLPVVGGDAAAACIAAASVLAKVSRDRLMVAMDQEHPGYGFADHKGYSTRAHSAALNDLGPSTQHRFSFINVRRLVVDGEPGQGGELECGKLAVDVPVDMPVDRVLREGQLSR</sequence>
<proteinExistence type="inferred from homology"/>
<keyword id="KW-0963">Cytoplasm</keyword>
<keyword id="KW-0255">Endonuclease</keyword>
<keyword id="KW-0378">Hydrolase</keyword>
<keyword id="KW-0464">Manganese</keyword>
<keyword id="KW-0479">Metal-binding</keyword>
<keyword id="KW-0540">Nuclease</keyword>
<protein>
    <recommendedName>
        <fullName evidence="1">Ribonuclease HII</fullName>
        <shortName evidence="1">RNase HII</shortName>
        <ecNumber evidence="1">3.1.26.4</ecNumber>
    </recommendedName>
</protein>
<evidence type="ECO:0000255" key="1">
    <source>
        <dbReference type="HAMAP-Rule" id="MF_00052"/>
    </source>
</evidence>
<evidence type="ECO:0000255" key="2">
    <source>
        <dbReference type="PROSITE-ProRule" id="PRU01319"/>
    </source>
</evidence>
<feature type="chain" id="PRO_1000074926" description="Ribonuclease HII">
    <location>
        <begin position="1"/>
        <end position="253"/>
    </location>
</feature>
<feature type="domain" description="RNase H type-2" evidence="2">
    <location>
        <begin position="30"/>
        <end position="221"/>
    </location>
</feature>
<feature type="binding site" evidence="1">
    <location>
        <position position="36"/>
    </location>
    <ligand>
        <name>a divalent metal cation</name>
        <dbReference type="ChEBI" id="CHEBI:60240"/>
    </ligand>
</feature>
<feature type="binding site" evidence="1">
    <location>
        <position position="37"/>
    </location>
    <ligand>
        <name>a divalent metal cation</name>
        <dbReference type="ChEBI" id="CHEBI:60240"/>
    </ligand>
</feature>
<feature type="binding site" evidence="1">
    <location>
        <position position="130"/>
    </location>
    <ligand>
        <name>a divalent metal cation</name>
        <dbReference type="ChEBI" id="CHEBI:60240"/>
    </ligand>
</feature>
<name>RNH2_MYCGI</name>
<gene>
    <name evidence="1" type="primary">rnhB</name>
    <name type="ordered locus">Mflv_4168</name>
</gene>
<organism>
    <name type="scientific">Mycolicibacterium gilvum (strain PYR-GCK)</name>
    <name type="common">Mycobacterium gilvum (strain PYR-GCK)</name>
    <dbReference type="NCBI Taxonomy" id="350054"/>
    <lineage>
        <taxon>Bacteria</taxon>
        <taxon>Bacillati</taxon>
        <taxon>Actinomycetota</taxon>
        <taxon>Actinomycetes</taxon>
        <taxon>Mycobacteriales</taxon>
        <taxon>Mycobacteriaceae</taxon>
        <taxon>Mycolicibacterium</taxon>
    </lineage>
</organism>